<organism>
    <name type="scientific">Nicotiana glauca</name>
    <name type="common">Glaucous tobacco</name>
    <name type="synonym">Tree tobacco</name>
    <dbReference type="NCBI Taxonomy" id="4090"/>
    <lineage>
        <taxon>Eukaryota</taxon>
        <taxon>Viridiplantae</taxon>
        <taxon>Streptophyta</taxon>
        <taxon>Embryophyta</taxon>
        <taxon>Tracheophyta</taxon>
        <taxon>Spermatophyta</taxon>
        <taxon>Magnoliopsida</taxon>
        <taxon>eudicotyledons</taxon>
        <taxon>Gunneridae</taxon>
        <taxon>Pentapetalae</taxon>
        <taxon>asterids</taxon>
        <taxon>lamiids</taxon>
        <taxon>Solanales</taxon>
        <taxon>Solanaceae</taxon>
        <taxon>Nicotianoideae</taxon>
        <taxon>Nicotianeae</taxon>
        <taxon>Nicotiana</taxon>
    </lineage>
</organism>
<evidence type="ECO:0000305" key="1"/>
<dbReference type="EC" id="3.1.3.48"/>
<dbReference type="EMBL" id="X03432">
    <property type="protein sequence ID" value="CAA27161.1"/>
    <property type="molecule type" value="Genomic_DNA"/>
</dbReference>
<dbReference type="PIR" id="C27259">
    <property type="entry name" value="C27259"/>
</dbReference>
<dbReference type="GO" id="GO:0004725">
    <property type="term" value="F:protein tyrosine phosphatase activity"/>
    <property type="evidence" value="ECO:0007669"/>
    <property type="project" value="UniProtKB-EC"/>
</dbReference>
<dbReference type="InterPro" id="IPR006064">
    <property type="entry name" value="Glycosidase"/>
</dbReference>
<dbReference type="Pfam" id="PF02027">
    <property type="entry name" value="RolB_RolC"/>
    <property type="match status" value="1"/>
</dbReference>
<sequence length="211" mass="24862">MASQSQFHPRFQPRNLTPAGKQINLSKEIQSAFMTYSEVYSKTLLDYQKRWADVIFDLEEKSLRMDILKQLAELLKNKICYHPPMFVEQPDLARERDQRVFIYLSREKMQKVLEEQSITVGMEAVLATTIQPYRSDLAVQEMLRVHNRAWPHRRMEERDLECFIAIFASTLFIHLTTLKVTNLYGREVDCTFFVRRASTNRPYDVVAFGTT</sequence>
<proteinExistence type="inferred from homology"/>
<keyword id="KW-0378">Hydrolase</keyword>
<keyword id="KW-0904">Protein phosphatase</keyword>
<protein>
    <recommendedName>
        <fullName>Protein-tyrosine phosphatase rolB</fullName>
        <shortName>Protein ROL B</shortName>
        <ecNumber>3.1.3.48</ecNumber>
    </recommendedName>
</protein>
<accession>P09178</accession>
<comment type="function">
    <text>Induces differentiation and growth of neoplastic roots (hairy roots). Seems to function as a tyrosine phosphatase.</text>
</comment>
<comment type="catalytic activity">
    <reaction>
        <text>O-phospho-L-tyrosyl-[protein] + H2O = L-tyrosyl-[protein] + phosphate</text>
        <dbReference type="Rhea" id="RHEA:10684"/>
        <dbReference type="Rhea" id="RHEA-COMP:10136"/>
        <dbReference type="Rhea" id="RHEA-COMP:20101"/>
        <dbReference type="ChEBI" id="CHEBI:15377"/>
        <dbReference type="ChEBI" id="CHEBI:43474"/>
        <dbReference type="ChEBI" id="CHEBI:46858"/>
        <dbReference type="ChEBI" id="CHEBI:61978"/>
        <dbReference type="EC" id="3.1.3.48"/>
    </reaction>
</comment>
<comment type="similarity">
    <text evidence="1">Belongs to the rolB/rolC family.</text>
</comment>
<name>ROLB_NICGL</name>
<gene>
    <name type="primary">ROLB</name>
</gene>
<feature type="chain" id="PRO_0000097401" description="Protein-tyrosine phosphatase rolB">
    <location>
        <begin position="1"/>
        <end position="211"/>
    </location>
</feature>
<reference key="1">
    <citation type="journal article" date="1986" name="Nature">
        <title>An Agrobacterium transformation in the evolution of the genus Nicotiana.</title>
        <authorList>
            <person name="Furner I.J."/>
            <person name="Huffman G.A."/>
            <person name="Amasino R.M."/>
            <person name="Garfinkel D.J."/>
            <person name="Gordon M.P."/>
            <person name="Nester E.W."/>
        </authorList>
    </citation>
    <scope>NUCLEOTIDE SEQUENCE [GENOMIC DNA]</scope>
</reference>